<feature type="signal peptide" evidence="3">
    <location>
        <begin position="1"/>
        <end position="19"/>
    </location>
</feature>
<feature type="chain" id="PRO_0000152775" description="Insulin-like growth factor-binding protein 5">
    <location>
        <begin position="20"/>
        <end position="271"/>
    </location>
</feature>
<feature type="domain" description="IGFBP N-terminal" evidence="5">
    <location>
        <begin position="22"/>
        <end position="102"/>
    </location>
</feature>
<feature type="domain" description="Thyroglobulin type-1" evidence="4">
    <location>
        <begin position="188"/>
        <end position="262"/>
    </location>
</feature>
<feature type="region of interest" description="Disordered" evidence="6">
    <location>
        <begin position="109"/>
        <end position="129"/>
    </location>
</feature>
<feature type="compositionally biased region" description="Basic and acidic residues" evidence="6">
    <location>
        <begin position="109"/>
        <end position="121"/>
    </location>
</feature>
<feature type="modified residue" description="Phosphoserine" evidence="1">
    <location>
        <position position="115"/>
    </location>
</feature>
<feature type="disulfide bond" evidence="5">
    <location>
        <begin position="26"/>
        <end position="52"/>
    </location>
</feature>
<feature type="disulfide bond" evidence="5">
    <location>
        <begin position="29"/>
        <end position="54"/>
    </location>
</feature>
<feature type="disulfide bond" evidence="5">
    <location>
        <begin position="37"/>
        <end position="55"/>
    </location>
</feature>
<feature type="disulfide bond" evidence="5">
    <location>
        <begin position="44"/>
        <end position="58"/>
    </location>
</feature>
<feature type="disulfide bond" evidence="5">
    <location>
        <begin position="66"/>
        <end position="79"/>
    </location>
</feature>
<feature type="disulfide bond" evidence="5">
    <location>
        <begin position="73"/>
        <end position="99"/>
    </location>
</feature>
<feature type="disulfide bond" evidence="4">
    <location>
        <begin position="191"/>
        <end position="218"/>
    </location>
</feature>
<feature type="disulfide bond" evidence="4">
    <location>
        <begin position="229"/>
        <end position="240"/>
    </location>
</feature>
<feature type="disulfide bond" evidence="4">
    <location>
        <begin position="242"/>
        <end position="262"/>
    </location>
</feature>
<dbReference type="EMBL" id="DN511652">
    <property type="status" value="NOT_ANNOTATED_CDS"/>
    <property type="molecule type" value="mRNA"/>
</dbReference>
<dbReference type="EMBL" id="BC149394">
    <property type="protein sequence ID" value="AAI49395.1"/>
    <property type="molecule type" value="mRNA"/>
</dbReference>
<dbReference type="EMBL" id="S52657">
    <property type="protein sequence ID" value="AAB24874.1"/>
    <property type="molecule type" value="mRNA"/>
</dbReference>
<dbReference type="PIR" id="B45403">
    <property type="entry name" value="B45403"/>
</dbReference>
<dbReference type="RefSeq" id="NP_001098797.1">
    <property type="nucleotide sequence ID" value="NM_001105327.2"/>
</dbReference>
<dbReference type="SMR" id="Q05717"/>
<dbReference type="FunCoup" id="Q05717">
    <property type="interactions" value="206"/>
</dbReference>
<dbReference type="STRING" id="9913.ENSBTAP00000061830"/>
<dbReference type="PaxDb" id="9913-ENSBTAP00000009285"/>
<dbReference type="GeneID" id="404185"/>
<dbReference type="KEGG" id="bta:404185"/>
<dbReference type="CTD" id="3488"/>
<dbReference type="VEuPathDB" id="HostDB:ENSBTAG00000054218"/>
<dbReference type="eggNOG" id="ENOG502QUPK">
    <property type="taxonomic scope" value="Eukaryota"/>
</dbReference>
<dbReference type="HOGENOM" id="CLU_070833_1_1_1"/>
<dbReference type="InParanoid" id="Q05717"/>
<dbReference type="OMA" id="YTERCAL"/>
<dbReference type="OrthoDB" id="6068400at2759"/>
<dbReference type="TreeFam" id="TF331211"/>
<dbReference type="Reactome" id="R-BTA-381426">
    <property type="pathway name" value="Regulation of Insulin-like Growth Factor (IGF) transport and uptake by Insulin-like Growth Factor Binding Proteins (IGFBPs)"/>
</dbReference>
<dbReference type="Reactome" id="R-BTA-8957275">
    <property type="pathway name" value="Post-translational protein phosphorylation"/>
</dbReference>
<dbReference type="Proteomes" id="UP000009136">
    <property type="component" value="Chromosome 2"/>
</dbReference>
<dbReference type="Bgee" id="ENSBTAG00000054218">
    <property type="expression patterns" value="Expressed in pigment epithelium of eye and 101 other cell types or tissues"/>
</dbReference>
<dbReference type="GO" id="GO:0005737">
    <property type="term" value="C:cytoplasm"/>
    <property type="evidence" value="ECO:0007669"/>
    <property type="project" value="UniProtKB-SubCell"/>
</dbReference>
<dbReference type="GO" id="GO:0005615">
    <property type="term" value="C:extracellular space"/>
    <property type="evidence" value="ECO:0000318"/>
    <property type="project" value="GO_Central"/>
</dbReference>
<dbReference type="GO" id="GO:0005634">
    <property type="term" value="C:nucleus"/>
    <property type="evidence" value="ECO:0007669"/>
    <property type="project" value="UniProtKB-SubCell"/>
</dbReference>
<dbReference type="GO" id="GO:0001968">
    <property type="term" value="F:fibronectin binding"/>
    <property type="evidence" value="ECO:0000318"/>
    <property type="project" value="GO_Central"/>
</dbReference>
<dbReference type="GO" id="GO:0031994">
    <property type="term" value="F:insulin-like growth factor I binding"/>
    <property type="evidence" value="ECO:0000318"/>
    <property type="project" value="GO_Central"/>
</dbReference>
<dbReference type="GO" id="GO:0031995">
    <property type="term" value="F:insulin-like growth factor II binding"/>
    <property type="evidence" value="ECO:0000318"/>
    <property type="project" value="GO_Central"/>
</dbReference>
<dbReference type="GO" id="GO:0043567">
    <property type="term" value="P:regulation of insulin-like growth factor receptor signaling pathway"/>
    <property type="evidence" value="ECO:0000318"/>
    <property type="project" value="GO_Central"/>
</dbReference>
<dbReference type="GO" id="GO:0060416">
    <property type="term" value="P:response to growth hormone"/>
    <property type="evidence" value="ECO:0000314"/>
    <property type="project" value="AgBase"/>
</dbReference>
<dbReference type="CDD" id="cd00191">
    <property type="entry name" value="TY"/>
    <property type="match status" value="1"/>
</dbReference>
<dbReference type="FunFam" id="4.10.40.20:FF:000001">
    <property type="entry name" value="Insulin-like growth factor binding protein 5"/>
    <property type="match status" value="1"/>
</dbReference>
<dbReference type="FunFam" id="4.10.800.10:FF:000005">
    <property type="entry name" value="Putative insulin-like growth factor-binding protein 5"/>
    <property type="match status" value="1"/>
</dbReference>
<dbReference type="Gene3D" id="4.10.40.20">
    <property type="match status" value="1"/>
</dbReference>
<dbReference type="Gene3D" id="4.10.800.10">
    <property type="entry name" value="Thyroglobulin type-1"/>
    <property type="match status" value="1"/>
</dbReference>
<dbReference type="InterPro" id="IPR009030">
    <property type="entry name" value="Growth_fac_rcpt_cys_sf"/>
</dbReference>
<dbReference type="InterPro" id="IPR012213">
    <property type="entry name" value="IGFBP-5"/>
</dbReference>
<dbReference type="InterPro" id="IPR000867">
    <property type="entry name" value="IGFBP-like"/>
</dbReference>
<dbReference type="InterPro" id="IPR022321">
    <property type="entry name" value="IGFBP_1-6_chordata"/>
</dbReference>
<dbReference type="InterPro" id="IPR017891">
    <property type="entry name" value="Insulin_GF-bd_Cys-rich_CS"/>
</dbReference>
<dbReference type="InterPro" id="IPR000716">
    <property type="entry name" value="Thyroglobulin_1"/>
</dbReference>
<dbReference type="InterPro" id="IPR036857">
    <property type="entry name" value="Thyroglobulin_1_sf"/>
</dbReference>
<dbReference type="PANTHER" id="PTHR11551">
    <property type="entry name" value="INSULIN-LIKE GROWTH FACTOR BINDING PROTEIN"/>
    <property type="match status" value="1"/>
</dbReference>
<dbReference type="PANTHER" id="PTHR11551:SF4">
    <property type="entry name" value="INSULIN-LIKE GROWTH FACTOR-BINDING PROTEIN 5"/>
    <property type="match status" value="1"/>
</dbReference>
<dbReference type="Pfam" id="PF00219">
    <property type="entry name" value="IGFBP"/>
    <property type="match status" value="1"/>
</dbReference>
<dbReference type="Pfam" id="PF00086">
    <property type="entry name" value="Thyroglobulin_1"/>
    <property type="match status" value="1"/>
</dbReference>
<dbReference type="PRINTS" id="PR01976">
    <property type="entry name" value="IGFBPFAMILY"/>
</dbReference>
<dbReference type="PRINTS" id="PR01981">
    <property type="entry name" value="IGFBPFAMILY5"/>
</dbReference>
<dbReference type="SMART" id="SM00121">
    <property type="entry name" value="IB"/>
    <property type="match status" value="1"/>
</dbReference>
<dbReference type="SMART" id="SM00211">
    <property type="entry name" value="TY"/>
    <property type="match status" value="1"/>
</dbReference>
<dbReference type="SUPFAM" id="SSF57184">
    <property type="entry name" value="Growth factor receptor domain"/>
    <property type="match status" value="1"/>
</dbReference>
<dbReference type="SUPFAM" id="SSF57610">
    <property type="entry name" value="Thyroglobulin type-1 domain"/>
    <property type="match status" value="1"/>
</dbReference>
<dbReference type="PROSITE" id="PS00222">
    <property type="entry name" value="IGFBP_N_1"/>
    <property type="match status" value="1"/>
</dbReference>
<dbReference type="PROSITE" id="PS51323">
    <property type="entry name" value="IGFBP_N_2"/>
    <property type="match status" value="1"/>
</dbReference>
<dbReference type="PROSITE" id="PS00484">
    <property type="entry name" value="THYROGLOBULIN_1_1"/>
    <property type="match status" value="1"/>
</dbReference>
<dbReference type="PROSITE" id="PS51162">
    <property type="entry name" value="THYROGLOBULIN_1_2"/>
    <property type="match status" value="1"/>
</dbReference>
<gene>
    <name type="primary">IGFBP5</name>
</gene>
<protein>
    <recommendedName>
        <fullName>Insulin-like growth factor-binding protein 5</fullName>
        <shortName>IBP-5</shortName>
        <shortName>IGF-binding protein 5</shortName>
        <shortName>IGFBP-5</shortName>
    </recommendedName>
</protein>
<name>IBP5_BOVIN</name>
<organism>
    <name type="scientific">Bos taurus</name>
    <name type="common">Bovine</name>
    <dbReference type="NCBI Taxonomy" id="9913"/>
    <lineage>
        <taxon>Eukaryota</taxon>
        <taxon>Metazoa</taxon>
        <taxon>Chordata</taxon>
        <taxon>Craniata</taxon>
        <taxon>Vertebrata</taxon>
        <taxon>Euteleostomi</taxon>
        <taxon>Mammalia</taxon>
        <taxon>Eutheria</taxon>
        <taxon>Laurasiatheria</taxon>
        <taxon>Artiodactyla</taxon>
        <taxon>Ruminantia</taxon>
        <taxon>Pecora</taxon>
        <taxon>Bovidae</taxon>
        <taxon>Bovinae</taxon>
        <taxon>Bos</taxon>
    </lineage>
</organism>
<evidence type="ECO:0000250" key="1">
    <source>
        <dbReference type="UniProtKB" id="P24593"/>
    </source>
</evidence>
<evidence type="ECO:0000250" key="2">
    <source>
        <dbReference type="UniProtKB" id="Q07079"/>
    </source>
</evidence>
<evidence type="ECO:0000255" key="3"/>
<evidence type="ECO:0000255" key="4">
    <source>
        <dbReference type="PROSITE-ProRule" id="PRU00500"/>
    </source>
</evidence>
<evidence type="ECO:0000255" key="5">
    <source>
        <dbReference type="PROSITE-ProRule" id="PRU00653"/>
    </source>
</evidence>
<evidence type="ECO:0000256" key="6">
    <source>
        <dbReference type="SAM" id="MobiDB-lite"/>
    </source>
</evidence>
<proteinExistence type="evidence at transcript level"/>
<sequence length="271" mass="30314">MVLTAVLLLLAACAGSAQGLGSFVHCEPCDEKALSMCPPSPLGCELVKEPGCGCCMTCALAEGQSCGVYTERCAQGLRCLPRQDEEKPLHALLHGRGVCLNEKSYREQAKIERDSREHEEPTTSEMAEETYSPKIFRPKHTRISELKAEAVKKDRRKKLTQSKFVGGAENTAHPRVISAPEMRQKSEQGPCRRHMEASLQELKASPRMVPRAVYLPNCDRKGFYKRKQCKPSRGRKRGICWCVDKYGMKLPGMEYVDGDFQCHTFDSSNVE</sequence>
<comment type="function">
    <text evidence="1 2">Multifunctional protein that plays a critical role in regulating the availability of IGFs to their receptors and thereby regulates IGF-mediated cellular processes including proliferation, differentiation, and apoptosis in a cell-type specific manner. Increases the cell proliferation of osteoblasts, intestinal smooth muscle cells and neuroblastoma cells (By similarity). Enhances adhesion and survival of epithelial cells but decreases adhesion of mesenchymal cells (By similarity). Once secreted, acts as a major mediator of mTORC1-dependent feedback inhibition of IGF1 signaling (By similarity). Also plays a role in the induction of extracellular matrix (ECM) production and deposition independently of its nuclear translocation and binding to IGFs. Acts itself as a growth factor that can act independently of IGFs to regulate bone formation. Acts as a ligand for the ROR1 receptor which triggers formation of ROR1/HER2 heterodimer to enhance CREB oncogenic signaling (By similarity).</text>
</comment>
<comment type="subunit">
    <text evidence="1">Interacts with IGF1; this interaction enhances the growth stimulatory effects of IGF1 on fibroblasts. Interacts with CAV1; this interaction allows trafficking of IGFBP5 from the plasma membrane to the nucleus. Interacts with NCL; this interaction is necessary for IGFBP5 localization to the nucleus.</text>
</comment>
<comment type="subcellular location">
    <subcellularLocation>
        <location evidence="1">Secreted</location>
    </subcellularLocation>
    <subcellularLocation>
        <location evidence="1">Cytoplasm</location>
    </subcellularLocation>
    <subcellularLocation>
        <location evidence="1">Nucleus</location>
    </subcellularLocation>
</comment>
<reference key="1">
    <citation type="submission" date="2005-03" db="EMBL/GenBank/DDBJ databases">
        <title>A second set of bovine ESTs from pooled-tissue normalized libraries.</title>
        <authorList>
            <person name="Smith T.P.L."/>
            <person name="Roberts A.J."/>
            <person name="Echternkamp S.E."/>
            <person name="Chitko-McKown C.G."/>
            <person name="Wray J.E."/>
            <person name="Keele J.W."/>
        </authorList>
    </citation>
    <scope>NUCLEOTIDE SEQUENCE [LARGE SCALE MRNA]</scope>
</reference>
<reference key="2">
    <citation type="submission" date="2007-07" db="EMBL/GenBank/DDBJ databases">
        <authorList>
            <consortium name="NIH - Mammalian Gene Collection (MGC) project"/>
        </authorList>
    </citation>
    <scope>NUCLEOTIDE SEQUENCE [LARGE SCALE MRNA]</scope>
    <source>
        <strain>Hereford</strain>
        <tissue>Fetal lung</tissue>
    </source>
</reference>
<reference key="3">
    <citation type="journal article" date="1992" name="Mol. Endocrinol.">
        <title>Endothelial cells express insulin-like growth factor-binding proteins 2 to 6.</title>
        <authorList>
            <person name="Moser D.R."/>
            <person name="Lowe W.L. Jr."/>
            <person name="Dake B.L."/>
            <person name="Booth B.A."/>
            <person name="Boes M."/>
            <person name="Clemmons D.R."/>
            <person name="Bar R.S."/>
        </authorList>
    </citation>
    <scope>NUCLEOTIDE SEQUENCE [MRNA] OF 34-144</scope>
</reference>
<accession>Q05717</accession>
<accession>A6QPM8</accession>
<keyword id="KW-0963">Cytoplasm</keyword>
<keyword id="KW-1015">Disulfide bond</keyword>
<keyword id="KW-0340">Growth factor binding</keyword>
<keyword id="KW-0539">Nucleus</keyword>
<keyword id="KW-0597">Phosphoprotein</keyword>
<keyword id="KW-1185">Reference proteome</keyword>
<keyword id="KW-0964">Secreted</keyword>
<keyword id="KW-0732">Signal</keyword>